<proteinExistence type="inferred from homology"/>
<accession>A8Z149</accession>
<evidence type="ECO:0000250" key="1"/>
<evidence type="ECO:0000255" key="2"/>
<evidence type="ECO:0000305" key="3"/>
<dbReference type="EMBL" id="CP000730">
    <property type="protein sequence ID" value="ABX28670.1"/>
    <property type="molecule type" value="Genomic_DNA"/>
</dbReference>
<dbReference type="RefSeq" id="WP_000616642.1">
    <property type="nucleotide sequence ID" value="NC_010079.1"/>
</dbReference>
<dbReference type="SMR" id="A8Z149"/>
<dbReference type="KEGG" id="sax:USA300HOU_0648"/>
<dbReference type="HOGENOM" id="CLU_125825_1_3_9"/>
<dbReference type="GO" id="GO:0005886">
    <property type="term" value="C:plasma membrane"/>
    <property type="evidence" value="ECO:0007669"/>
    <property type="project" value="UniProtKB-SubCell"/>
</dbReference>
<dbReference type="GO" id="GO:0015385">
    <property type="term" value="F:sodium:proton antiporter activity"/>
    <property type="evidence" value="ECO:0007669"/>
    <property type="project" value="TreeGrafter"/>
</dbReference>
<dbReference type="InterPro" id="IPR007208">
    <property type="entry name" value="MrpF/PhaF-like"/>
</dbReference>
<dbReference type="NCBIfam" id="NF009300">
    <property type="entry name" value="PRK12657.1"/>
    <property type="match status" value="1"/>
</dbReference>
<dbReference type="PANTHER" id="PTHR34702">
    <property type="entry name" value="NA(+)/H(+) ANTIPORTER SUBUNIT F1"/>
    <property type="match status" value="1"/>
</dbReference>
<dbReference type="PANTHER" id="PTHR34702:SF1">
    <property type="entry name" value="NA(+)_H(+) ANTIPORTER SUBUNIT F"/>
    <property type="match status" value="1"/>
</dbReference>
<dbReference type="Pfam" id="PF04066">
    <property type="entry name" value="MrpF_PhaF"/>
    <property type="match status" value="1"/>
</dbReference>
<dbReference type="PIRSF" id="PIRSF028784">
    <property type="entry name" value="MrpF"/>
    <property type="match status" value="1"/>
</dbReference>
<keyword id="KW-0050">Antiport</keyword>
<keyword id="KW-1003">Cell membrane</keyword>
<keyword id="KW-0406">Ion transport</keyword>
<keyword id="KW-0472">Membrane</keyword>
<keyword id="KW-0812">Transmembrane</keyword>
<keyword id="KW-1133">Transmembrane helix</keyword>
<keyword id="KW-0813">Transport</keyword>
<comment type="subunit">
    <text evidence="1">May form a heterooligomeric complex that consists of seven subunits: mnhA2, mnhB2, mnhC2, mnhD2, mnhE2, mnhF2 and mnhG2.</text>
</comment>
<comment type="subcellular location">
    <subcellularLocation>
        <location evidence="3">Cell membrane</location>
        <topology evidence="3">Multi-pass membrane protein</topology>
    </subcellularLocation>
</comment>
<comment type="similarity">
    <text evidence="3">Belongs to the CPA3 antiporters (TC 2.A.63) subunit F family.</text>
</comment>
<organism>
    <name type="scientific">Staphylococcus aureus (strain USA300 / TCH1516)</name>
    <dbReference type="NCBI Taxonomy" id="451516"/>
    <lineage>
        <taxon>Bacteria</taxon>
        <taxon>Bacillati</taxon>
        <taxon>Bacillota</taxon>
        <taxon>Bacilli</taxon>
        <taxon>Bacillales</taxon>
        <taxon>Staphylococcaceae</taxon>
        <taxon>Staphylococcus</taxon>
    </lineage>
</organism>
<sequence length="100" mass="10730">MIQTITHIMIISSLIIFGIALIICLFRLIKGPTTADRVVTFDTTSAVVMSIVGVLSVLMGTVSFLDSIMLIAIISFVSSVSISRFIGGGHVFNGNNKRNL</sequence>
<reference key="1">
    <citation type="journal article" date="2007" name="BMC Microbiol.">
        <title>Subtle genetic changes enhance virulence of methicillin resistant and sensitive Staphylococcus aureus.</title>
        <authorList>
            <person name="Highlander S.K."/>
            <person name="Hulten K.G."/>
            <person name="Qin X."/>
            <person name="Jiang H."/>
            <person name="Yerrapragada S."/>
            <person name="Mason E.O. Jr."/>
            <person name="Shang Y."/>
            <person name="Williams T.M."/>
            <person name="Fortunov R.M."/>
            <person name="Liu Y."/>
            <person name="Igboeli O."/>
            <person name="Petrosino J."/>
            <person name="Tirumalai M."/>
            <person name="Uzman A."/>
            <person name="Fox G.E."/>
            <person name="Cardenas A.M."/>
            <person name="Muzny D.M."/>
            <person name="Hemphill L."/>
            <person name="Ding Y."/>
            <person name="Dugan S."/>
            <person name="Blyth P.R."/>
            <person name="Buhay C.J."/>
            <person name="Dinh H.H."/>
            <person name="Hawes A.C."/>
            <person name="Holder M."/>
            <person name="Kovar C.L."/>
            <person name="Lee S.L."/>
            <person name="Liu W."/>
            <person name="Nazareth L.V."/>
            <person name="Wang Q."/>
            <person name="Zhou J."/>
            <person name="Kaplan S.L."/>
            <person name="Weinstock G.M."/>
        </authorList>
    </citation>
    <scope>NUCLEOTIDE SEQUENCE [LARGE SCALE GENOMIC DNA]</scope>
    <source>
        <strain>USA300 / TCH1516</strain>
    </source>
</reference>
<feature type="chain" id="PRO_0000372203" description="Putative antiporter subunit mnhF2">
    <location>
        <begin position="1"/>
        <end position="100"/>
    </location>
</feature>
<feature type="transmembrane region" description="Helical" evidence="2">
    <location>
        <begin position="5"/>
        <end position="25"/>
    </location>
</feature>
<feature type="transmembrane region" description="Helical" evidence="2">
    <location>
        <begin position="38"/>
        <end position="60"/>
    </location>
</feature>
<feature type="transmembrane region" description="Helical" evidence="2">
    <location>
        <begin position="70"/>
        <end position="92"/>
    </location>
</feature>
<gene>
    <name type="primary">mnhF2</name>
    <name type="synonym">mrpF2</name>
    <name type="ordered locus">USA300HOU_0648</name>
</gene>
<protein>
    <recommendedName>
        <fullName>Putative antiporter subunit mnhF2</fullName>
    </recommendedName>
    <alternativeName>
        <fullName>Mrp complex subunit F2</fullName>
    </alternativeName>
    <alternativeName>
        <fullName>Putative NADH-ubiquinone oxidoreductase subunit mnhF2</fullName>
    </alternativeName>
</protein>
<name>MNHF2_STAAT</name>